<dbReference type="EMBL" id="D84432">
    <property type="protein sequence ID" value="BAA12483.1"/>
    <property type="molecule type" value="Genomic_DNA"/>
</dbReference>
<dbReference type="EMBL" id="AL009126">
    <property type="protein sequence ID" value="CAB14457.2"/>
    <property type="molecule type" value="Genomic_DNA"/>
</dbReference>
<dbReference type="EMBL" id="U18532">
    <property type="protein sequence ID" value="AAB59995.1"/>
    <property type="molecule type" value="Genomic_DNA"/>
</dbReference>
<dbReference type="PIR" id="H69968">
    <property type="entry name" value="H69968"/>
</dbReference>
<dbReference type="RefSeq" id="NP_390406.2">
    <property type="nucleotide sequence ID" value="NC_000964.3"/>
</dbReference>
<dbReference type="RefSeq" id="WP_003230055.1">
    <property type="nucleotide sequence ID" value="NZ_OZ025638.1"/>
</dbReference>
<dbReference type="SMR" id="P42095"/>
<dbReference type="FunCoup" id="P42095">
    <property type="interactions" value="181"/>
</dbReference>
<dbReference type="STRING" id="224308.BSU25280"/>
<dbReference type="PaxDb" id="224308-BSU25280"/>
<dbReference type="EnsemblBacteria" id="CAB14457">
    <property type="protein sequence ID" value="CAB14457"/>
    <property type="gene ID" value="BSU_25280"/>
</dbReference>
<dbReference type="GeneID" id="937881"/>
<dbReference type="KEGG" id="bsu:BSU25280"/>
<dbReference type="PATRIC" id="fig|224308.179.peg.2747"/>
<dbReference type="eggNOG" id="COG1381">
    <property type="taxonomic scope" value="Bacteria"/>
</dbReference>
<dbReference type="InParanoid" id="P42095"/>
<dbReference type="OrthoDB" id="9797083at2"/>
<dbReference type="PhylomeDB" id="P42095"/>
<dbReference type="BioCyc" id="BSUB:BSU25280-MONOMER"/>
<dbReference type="Proteomes" id="UP000001570">
    <property type="component" value="Chromosome"/>
</dbReference>
<dbReference type="GO" id="GO:0043590">
    <property type="term" value="C:bacterial nucleoid"/>
    <property type="evidence" value="ECO:0000314"/>
    <property type="project" value="UniProtKB"/>
</dbReference>
<dbReference type="GO" id="GO:0005737">
    <property type="term" value="C:cytoplasm"/>
    <property type="evidence" value="ECO:0007669"/>
    <property type="project" value="UniProtKB-KW"/>
</dbReference>
<dbReference type="GO" id="GO:0006310">
    <property type="term" value="P:DNA recombination"/>
    <property type="evidence" value="ECO:0007669"/>
    <property type="project" value="UniProtKB-UniRule"/>
</dbReference>
<dbReference type="GO" id="GO:0006302">
    <property type="term" value="P:double-strand break repair"/>
    <property type="evidence" value="ECO:0000314"/>
    <property type="project" value="UniProtKB"/>
</dbReference>
<dbReference type="Gene3D" id="2.40.50.140">
    <property type="entry name" value="Nucleic acid-binding proteins"/>
    <property type="match status" value="1"/>
</dbReference>
<dbReference type="Gene3D" id="1.20.1440.120">
    <property type="entry name" value="Recombination protein O, C-terminal domain"/>
    <property type="match status" value="1"/>
</dbReference>
<dbReference type="HAMAP" id="MF_00201">
    <property type="entry name" value="RecO"/>
    <property type="match status" value="1"/>
</dbReference>
<dbReference type="InterPro" id="IPR037278">
    <property type="entry name" value="ARFGAP/RecO"/>
</dbReference>
<dbReference type="InterPro" id="IPR022572">
    <property type="entry name" value="DNA_rep/recomb_RecO_N"/>
</dbReference>
<dbReference type="InterPro" id="IPR012340">
    <property type="entry name" value="NA-bd_OB-fold"/>
</dbReference>
<dbReference type="InterPro" id="IPR003717">
    <property type="entry name" value="RecO"/>
</dbReference>
<dbReference type="InterPro" id="IPR042242">
    <property type="entry name" value="RecO_C"/>
</dbReference>
<dbReference type="NCBIfam" id="TIGR00613">
    <property type="entry name" value="reco"/>
    <property type="match status" value="1"/>
</dbReference>
<dbReference type="PANTHER" id="PTHR33991">
    <property type="entry name" value="DNA REPAIR PROTEIN RECO"/>
    <property type="match status" value="1"/>
</dbReference>
<dbReference type="PANTHER" id="PTHR33991:SF1">
    <property type="entry name" value="DNA REPAIR PROTEIN RECO"/>
    <property type="match status" value="1"/>
</dbReference>
<dbReference type="Pfam" id="PF02565">
    <property type="entry name" value="RecO_C"/>
    <property type="match status" value="1"/>
</dbReference>
<dbReference type="Pfam" id="PF11967">
    <property type="entry name" value="RecO_N"/>
    <property type="match status" value="1"/>
</dbReference>
<dbReference type="SUPFAM" id="SSF57863">
    <property type="entry name" value="ArfGap/RecO-like zinc finger"/>
    <property type="match status" value="1"/>
</dbReference>
<dbReference type="SUPFAM" id="SSF50249">
    <property type="entry name" value="Nucleic acid-binding proteins"/>
    <property type="match status" value="1"/>
</dbReference>
<name>RECO_BACSU</name>
<proteinExistence type="evidence at protein level"/>
<accession>P42095</accession>
<protein>
    <recommendedName>
        <fullName>DNA repair protein RecO</fullName>
    </recommendedName>
    <alternativeName>
        <fullName>Recombination protein O</fullName>
    </alternativeName>
</protein>
<organism>
    <name type="scientific">Bacillus subtilis (strain 168)</name>
    <dbReference type="NCBI Taxonomy" id="224308"/>
    <lineage>
        <taxon>Bacteria</taxon>
        <taxon>Bacillati</taxon>
        <taxon>Bacillota</taxon>
        <taxon>Bacilli</taxon>
        <taxon>Bacillales</taxon>
        <taxon>Bacillaceae</taxon>
        <taxon>Bacillus</taxon>
    </lineage>
</organism>
<comment type="function">
    <text evidence="1 3">Plays a role in DNA double-stranded break repair. It seems to be involved in an RecBC-independent recombinational process of DNA repair. It may act with RecF and RecR. Is recruited to repair centers, foci that are the site of double-strand break(s) after RecN and before RecF; may actively recruit RecF (PubMed:15186413). A positive modulator of RecA (PubMed:32117122).</text>
</comment>
<comment type="subunit">
    <text evidence="1 2">Recruited to foci following DNA damage; probably interacts with RecF (PubMed:15186413). Interacts with SSB (sbbA) (PubMed:21170359).</text>
</comment>
<comment type="subcellular location">
    <subcellularLocation>
        <location evidence="1 2">Cytoplasm</location>
        <location evidence="1 2">Nucleoid</location>
    </subcellularLocation>
    <text evidence="1 2">Cytoplasmically located in untreated cells. Recruited to foci following treatment with DNA damaging agents; these foci are presumably the breaks themselves. They are almost always located within nucleoids (PubMed:15186413). Another study found it localizes in tight foci on the nucleoid with active replication forks; targeted via the 6 C-terminal residues of SSB (ssbA) (PubMed:21170359).</text>
</comment>
<comment type="disruption phenotype">
    <text evidence="3 4">A single recO deletion does not induce RecA expression after DNA damage (PubMed:32117122). Cells are very sensitive to DNA damaging agent methyl methanesulfonate (MMS) (PubMed:32793628). A recO deletion suppresses the lethality of pcrA DNA helicase depletion and increases survival of the strain in the presence of H(2)O(2) but not MMS (PubMed:32793628).</text>
</comment>
<comment type="miscellaneous">
    <text evidence="4">The mutation previously known as recL16 is a mutation in this gene.</text>
</comment>
<comment type="similarity">
    <text evidence="5">Belongs to the RecO family.</text>
</comment>
<evidence type="ECO:0000269" key="1">
    <source>
    </source>
</evidence>
<evidence type="ECO:0000269" key="2">
    <source>
    </source>
</evidence>
<evidence type="ECO:0000269" key="3">
    <source>
    </source>
</evidence>
<evidence type="ECO:0000269" key="4">
    <source>
    </source>
</evidence>
<evidence type="ECO:0000305" key="5"/>
<keyword id="KW-0963">Cytoplasm</keyword>
<keyword id="KW-0227">DNA damage</keyword>
<keyword id="KW-0233">DNA recombination</keyword>
<keyword id="KW-0234">DNA repair</keyword>
<keyword id="KW-1185">Reference proteome</keyword>
<feature type="chain" id="PRO_0000204932" description="DNA repair protein RecO">
    <location>
        <begin position="1"/>
        <end position="255"/>
    </location>
</feature>
<feature type="sequence conflict" description="In Ref. 1; BAA12483." evidence="5" ref="1">
    <original>L</original>
    <variation>M</variation>
    <location>
        <position position="122"/>
    </location>
</feature>
<reference key="1">
    <citation type="journal article" date="1996" name="Microbiology">
        <title>Systematic sequencing of the 283 kb 210 degrees-232 degrees region of the Bacillus subtilis genome containing the skin element and many sporulation genes.</title>
        <authorList>
            <person name="Mizuno M."/>
            <person name="Masuda S."/>
            <person name="Takemaru K."/>
            <person name="Hosono S."/>
            <person name="Sato T."/>
            <person name="Takeuchi M."/>
            <person name="Kobayashi Y."/>
        </authorList>
    </citation>
    <scope>NUCLEOTIDE SEQUENCE [GENOMIC DNA]</scope>
    <source>
        <strain>168 / JH642</strain>
    </source>
</reference>
<reference key="2">
    <citation type="journal article" date="1997" name="Nature">
        <title>The complete genome sequence of the Gram-positive bacterium Bacillus subtilis.</title>
        <authorList>
            <person name="Kunst F."/>
            <person name="Ogasawara N."/>
            <person name="Moszer I."/>
            <person name="Albertini A.M."/>
            <person name="Alloni G."/>
            <person name="Azevedo V."/>
            <person name="Bertero M.G."/>
            <person name="Bessieres P."/>
            <person name="Bolotin A."/>
            <person name="Borchert S."/>
            <person name="Borriss R."/>
            <person name="Boursier L."/>
            <person name="Brans A."/>
            <person name="Braun M."/>
            <person name="Brignell S.C."/>
            <person name="Bron S."/>
            <person name="Brouillet S."/>
            <person name="Bruschi C.V."/>
            <person name="Caldwell B."/>
            <person name="Capuano V."/>
            <person name="Carter N.M."/>
            <person name="Choi S.-K."/>
            <person name="Codani J.-J."/>
            <person name="Connerton I.F."/>
            <person name="Cummings N.J."/>
            <person name="Daniel R.A."/>
            <person name="Denizot F."/>
            <person name="Devine K.M."/>
            <person name="Duesterhoeft A."/>
            <person name="Ehrlich S.D."/>
            <person name="Emmerson P.T."/>
            <person name="Entian K.-D."/>
            <person name="Errington J."/>
            <person name="Fabret C."/>
            <person name="Ferrari E."/>
            <person name="Foulger D."/>
            <person name="Fritz C."/>
            <person name="Fujita M."/>
            <person name="Fujita Y."/>
            <person name="Fuma S."/>
            <person name="Galizzi A."/>
            <person name="Galleron N."/>
            <person name="Ghim S.-Y."/>
            <person name="Glaser P."/>
            <person name="Goffeau A."/>
            <person name="Golightly E.J."/>
            <person name="Grandi G."/>
            <person name="Guiseppi G."/>
            <person name="Guy B.J."/>
            <person name="Haga K."/>
            <person name="Haiech J."/>
            <person name="Harwood C.R."/>
            <person name="Henaut A."/>
            <person name="Hilbert H."/>
            <person name="Holsappel S."/>
            <person name="Hosono S."/>
            <person name="Hullo M.-F."/>
            <person name="Itaya M."/>
            <person name="Jones L.-M."/>
            <person name="Joris B."/>
            <person name="Karamata D."/>
            <person name="Kasahara Y."/>
            <person name="Klaerr-Blanchard M."/>
            <person name="Klein C."/>
            <person name="Kobayashi Y."/>
            <person name="Koetter P."/>
            <person name="Koningstein G."/>
            <person name="Krogh S."/>
            <person name="Kumano M."/>
            <person name="Kurita K."/>
            <person name="Lapidus A."/>
            <person name="Lardinois S."/>
            <person name="Lauber J."/>
            <person name="Lazarevic V."/>
            <person name="Lee S.-M."/>
            <person name="Levine A."/>
            <person name="Liu H."/>
            <person name="Masuda S."/>
            <person name="Mauel C."/>
            <person name="Medigue C."/>
            <person name="Medina N."/>
            <person name="Mellado R.P."/>
            <person name="Mizuno M."/>
            <person name="Moestl D."/>
            <person name="Nakai S."/>
            <person name="Noback M."/>
            <person name="Noone D."/>
            <person name="O'Reilly M."/>
            <person name="Ogawa K."/>
            <person name="Ogiwara A."/>
            <person name="Oudega B."/>
            <person name="Park S.-H."/>
            <person name="Parro V."/>
            <person name="Pohl T.M."/>
            <person name="Portetelle D."/>
            <person name="Porwollik S."/>
            <person name="Prescott A.M."/>
            <person name="Presecan E."/>
            <person name="Pujic P."/>
            <person name="Purnelle B."/>
            <person name="Rapoport G."/>
            <person name="Rey M."/>
            <person name="Reynolds S."/>
            <person name="Rieger M."/>
            <person name="Rivolta C."/>
            <person name="Rocha E."/>
            <person name="Roche B."/>
            <person name="Rose M."/>
            <person name="Sadaie Y."/>
            <person name="Sato T."/>
            <person name="Scanlan E."/>
            <person name="Schleich S."/>
            <person name="Schroeter R."/>
            <person name="Scoffone F."/>
            <person name="Sekiguchi J."/>
            <person name="Sekowska A."/>
            <person name="Seror S.J."/>
            <person name="Serror P."/>
            <person name="Shin B.-S."/>
            <person name="Soldo B."/>
            <person name="Sorokin A."/>
            <person name="Tacconi E."/>
            <person name="Takagi T."/>
            <person name="Takahashi H."/>
            <person name="Takemaru K."/>
            <person name="Takeuchi M."/>
            <person name="Tamakoshi A."/>
            <person name="Tanaka T."/>
            <person name="Terpstra P."/>
            <person name="Tognoni A."/>
            <person name="Tosato V."/>
            <person name="Uchiyama S."/>
            <person name="Vandenbol M."/>
            <person name="Vannier F."/>
            <person name="Vassarotti A."/>
            <person name="Viari A."/>
            <person name="Wambutt R."/>
            <person name="Wedler E."/>
            <person name="Wedler H."/>
            <person name="Weitzenegger T."/>
            <person name="Winters P."/>
            <person name="Wipat A."/>
            <person name="Yamamoto H."/>
            <person name="Yamane K."/>
            <person name="Yasumoto K."/>
            <person name="Yata K."/>
            <person name="Yoshida K."/>
            <person name="Yoshikawa H.-F."/>
            <person name="Zumstein E."/>
            <person name="Yoshikawa H."/>
            <person name="Danchin A."/>
        </authorList>
    </citation>
    <scope>NUCLEOTIDE SEQUENCE [LARGE SCALE GENOMIC DNA]</scope>
    <source>
        <strain>168</strain>
    </source>
</reference>
<reference key="3">
    <citation type="journal article" date="2009" name="Microbiology">
        <title>From a consortium sequence to a unified sequence: the Bacillus subtilis 168 reference genome a decade later.</title>
        <authorList>
            <person name="Barbe V."/>
            <person name="Cruveiller S."/>
            <person name="Kunst F."/>
            <person name="Lenoble P."/>
            <person name="Meurice G."/>
            <person name="Sekowska A."/>
            <person name="Vallenet D."/>
            <person name="Wang T."/>
            <person name="Moszer I."/>
            <person name="Medigue C."/>
            <person name="Danchin A."/>
        </authorList>
    </citation>
    <scope>SEQUENCE REVISION TO 122</scope>
</reference>
<reference key="4">
    <citation type="submission" date="1994-12" db="EMBL/GenBank/DDBJ databases">
        <authorList>
            <person name="Johnstone B.H."/>
            <person name="Torrance P.D."/>
            <person name="Maslesa-Galic S."/>
            <person name="Zarimani A.I."/>
            <person name="Powell B.S."/>
            <person name="Court D.L."/>
            <person name="Simons R.W."/>
        </authorList>
    </citation>
    <scope>NUCLEOTIDE SEQUENCE [GENOMIC DNA] OF 1-114</scope>
    <source>
        <strain>168</strain>
    </source>
</reference>
<reference key="5">
    <citation type="journal article" date="1999" name="Mol. Gen. Genet.">
        <title>Analysis of the Bacillus subtilis recO gene: recO forms part of the RecFLOR function.</title>
        <authorList>
            <person name="Fernandez S."/>
            <person name="Kobayashi Y."/>
            <person name="Ogasawara N."/>
            <person name="Alonso J.C."/>
        </authorList>
    </citation>
    <scope>CHARACTERIZATION</scope>
</reference>
<reference key="6">
    <citation type="journal article" date="2004" name="Mol. Microbiol.">
        <title>Visualization of DNA double-strand break repair in live bacteria reveals dynamic recruitment of Bacillus subtilis RecF, RecO and RecN proteins to distinct sites on the nucleoids.</title>
        <authorList>
            <person name="Kidane D."/>
            <person name="Sanchez H."/>
            <person name="Alonso J.C."/>
            <person name="Graumann P.L."/>
        </authorList>
    </citation>
    <scope>SUBCELLULAR LOCATION</scope>
    <scope>TEMPORAL ORDER OF DNA DOUBLE-STRAND BREAK RECRUITMENT</scope>
    <source>
        <strain>168 / YB886 / BG214</strain>
    </source>
</reference>
<reference key="7">
    <citation type="journal article" date="2005" name="J. Cell Biol.">
        <title>Dynamic formation of RecA filaments at DNA double strand break repair centers in live cells.</title>
        <authorList>
            <person name="Kidane D."/>
            <person name="Graumann P.L."/>
        </authorList>
    </citation>
    <scope>RECRUITMENT OF RECA</scope>
    <source>
        <strain>168 / YB886 / BG214</strain>
    </source>
</reference>
<reference key="8">
    <citation type="journal article" date="2010" name="PLoS Genet.">
        <title>The C-terminal domain of the bacterial SSB protein acts as a DNA maintenance hub at active chromosome replication forks.</title>
        <authorList>
            <person name="Costes A."/>
            <person name="Lecointe F."/>
            <person name="McGovern S."/>
            <person name="Quevillon-Cheruel S."/>
            <person name="Polard P."/>
        </authorList>
    </citation>
    <scope>INTERACTION WITH SSB</scope>
    <scope>SUBCELLULAR LOCATION</scope>
    <source>
        <strain>168</strain>
    </source>
</reference>
<reference key="9">
    <citation type="journal article" date="2020" name="Front. Microbiol.">
        <title>Bacillus subtilis RarA Acts as a Positive RecA Accessory Protein.</title>
        <authorList>
            <person name="Romero H."/>
            <person name="Serrano E."/>
            <person name="Hernandez-Tamayo R."/>
            <person name="Carrasco B."/>
            <person name="Cardenas P.P."/>
            <person name="Ayora S."/>
            <person name="Graumann P.L."/>
            <person name="Alonso J.C."/>
        </authorList>
    </citation>
    <scope>FUNCTION</scope>
    <scope>DISRUPTION PHENOTYPE</scope>
    <source>
        <strain>168 / YB886 / BG214</strain>
    </source>
</reference>
<reference key="10">
    <citation type="journal article" date="2020" name="Front. Mol. Biosci.">
        <title>Bacillus subtilis PcrA Couples DNA Replication, Transcription, Recombination and Segregation.</title>
        <authorList>
            <person name="Moreno-Del Alamo M."/>
            <person name="Torres R."/>
            <person name="Manfredi C."/>
            <person name="Ruiz-Maso J.A."/>
            <person name="Del Solar G."/>
            <person name="Alonso J.C."/>
        </authorList>
    </citation>
    <scope>DISRUPTION PHENOTYPE</scope>
    <source>
        <strain>168 / YB886 / BG214</strain>
    </source>
</reference>
<gene>
    <name type="primary">recO</name>
    <name type="synonym">yqfI</name>
    <name type="synonym">yqxN</name>
    <name type="ordered locus">BSU25280</name>
</gene>
<sequence length="255" mass="29328">MLTKCEGIVLRTNDYGETNKIVTLLTREHGKIGVMARGAKKPNSRLSAVSQPFLYGSFLMQKTSGLGTLQQGEMILSMRGIREDLFLTAYAAYVAELVDRGTEEKKPNPYLFEFILESLKQLNEGTDPDVITFIVQMKMLGVMGLYPELNHCVHCKSQDGTFHFSVRDNGFICHRCFEKDPYRIPIKPQTARLLRLFYYFDLSRLGNVSLKEETKAELKQVIDLYYEEYSGLYLKSKRFLDQMESMKHLMGENKS</sequence>